<accession>A7X413</accession>
<comment type="function">
    <text evidence="1">Mannose-binding lectin which recognizes specific carbohydrate structures and agglutinates a variety of animal cells by binding to cell-surface glycoproteins and glycolipids. May be a calcium-dependent lectin (By similarity).</text>
</comment>
<comment type="subcellular location">
    <subcellularLocation>
        <location evidence="1">Secreted</location>
    </subcellularLocation>
</comment>
<comment type="tissue specificity">
    <text>Expressed by the venom gland.</text>
</comment>
<comment type="similarity">
    <text evidence="4">Belongs to the true venom lectin family.</text>
</comment>
<proteinExistence type="evidence at transcript level"/>
<dbReference type="EMBL" id="EU029702">
    <property type="protein sequence ID" value="ABU68502.1"/>
    <property type="molecule type" value="mRNA"/>
</dbReference>
<dbReference type="SMR" id="A7X413"/>
<dbReference type="GO" id="GO:0005576">
    <property type="term" value="C:extracellular region"/>
    <property type="evidence" value="ECO:0007669"/>
    <property type="project" value="UniProtKB-SubCell"/>
</dbReference>
<dbReference type="GO" id="GO:0030246">
    <property type="term" value="F:carbohydrate binding"/>
    <property type="evidence" value="ECO:0007669"/>
    <property type="project" value="UniProtKB-KW"/>
</dbReference>
<dbReference type="GO" id="GO:0046872">
    <property type="term" value="F:metal ion binding"/>
    <property type="evidence" value="ECO:0007669"/>
    <property type="project" value="UniProtKB-KW"/>
</dbReference>
<dbReference type="CDD" id="cd00037">
    <property type="entry name" value="CLECT"/>
    <property type="match status" value="1"/>
</dbReference>
<dbReference type="Gene3D" id="3.10.100.10">
    <property type="entry name" value="Mannose-Binding Protein A, subunit A"/>
    <property type="match status" value="1"/>
</dbReference>
<dbReference type="InterPro" id="IPR001304">
    <property type="entry name" value="C-type_lectin-like"/>
</dbReference>
<dbReference type="InterPro" id="IPR016186">
    <property type="entry name" value="C-type_lectin-like/link_sf"/>
</dbReference>
<dbReference type="InterPro" id="IPR050111">
    <property type="entry name" value="C-type_lectin/snaclec_domain"/>
</dbReference>
<dbReference type="InterPro" id="IPR018378">
    <property type="entry name" value="C-type_lectin_CS"/>
</dbReference>
<dbReference type="InterPro" id="IPR016187">
    <property type="entry name" value="CTDL_fold"/>
</dbReference>
<dbReference type="PANTHER" id="PTHR22803">
    <property type="entry name" value="MANNOSE, PHOSPHOLIPASE, LECTIN RECEPTOR RELATED"/>
    <property type="match status" value="1"/>
</dbReference>
<dbReference type="Pfam" id="PF00059">
    <property type="entry name" value="Lectin_C"/>
    <property type="match status" value="1"/>
</dbReference>
<dbReference type="PRINTS" id="PR01504">
    <property type="entry name" value="PNCREATITSAP"/>
</dbReference>
<dbReference type="SMART" id="SM00034">
    <property type="entry name" value="CLECT"/>
    <property type="match status" value="1"/>
</dbReference>
<dbReference type="SUPFAM" id="SSF56436">
    <property type="entry name" value="C-type lectin-like"/>
    <property type="match status" value="1"/>
</dbReference>
<dbReference type="PROSITE" id="PS00615">
    <property type="entry name" value="C_TYPE_LECTIN_1"/>
    <property type="match status" value="1"/>
</dbReference>
<dbReference type="PROSITE" id="PS50041">
    <property type="entry name" value="C_TYPE_LECTIN_2"/>
    <property type="match status" value="1"/>
</dbReference>
<evidence type="ECO:0000250" key="1"/>
<evidence type="ECO:0000255" key="2"/>
<evidence type="ECO:0000255" key="3">
    <source>
        <dbReference type="PROSITE-ProRule" id="PRU00040"/>
    </source>
</evidence>
<evidence type="ECO:0000305" key="4"/>
<reference key="1">
    <citation type="journal article" date="2008" name="Mol. Cell. Proteomics">
        <title>Evolution of an arsenal: structural and functional diversification of the venom system in the advanced snakes (Caenophidia).</title>
        <authorList>
            <person name="Fry B.G."/>
            <person name="Scheib H."/>
            <person name="van der Weerd L."/>
            <person name="Young B."/>
            <person name="McNaughtan J."/>
            <person name="Ramjan S.F.R."/>
            <person name="Vidal N."/>
            <person name="Poelmann R.E."/>
            <person name="Norman J.A."/>
        </authorList>
    </citation>
    <scope>NUCLEOTIDE SEQUENCE [MRNA]</scope>
    <source>
        <tissue>Venom gland</tissue>
    </source>
</reference>
<sequence length="161" mass="18252">MRRFIFMSLGLLVLAFSLSGIGANQNCPSGWFPHNISCYKLFTERKNWDQAQRTCMEEQENGQLASITDADTAVKLSNKLSGNWNFFDIWFGLSLSKTRGFWLWPDGSMVTFTNWGKGEPNNFWDMESCAALTAASGYLSWNDKNCGLLHYFICQTQSRGG</sequence>
<feature type="signal peptide" evidence="2">
    <location>
        <begin position="1"/>
        <end position="23"/>
    </location>
</feature>
<feature type="chain" id="PRO_0000355282" description="C-type lectin lectoxin-Lio3">
    <location>
        <begin position="24"/>
        <end position="161"/>
    </location>
</feature>
<feature type="domain" description="C-type lectin" evidence="3">
    <location>
        <begin position="34"/>
        <end position="155"/>
    </location>
</feature>
<feature type="short sequence motif" description="Mannose-binding">
    <location>
        <begin position="117"/>
        <end position="119"/>
    </location>
</feature>
<feature type="binding site" evidence="1">
    <location>
        <position position="127"/>
    </location>
    <ligand>
        <name>Ca(2+)</name>
        <dbReference type="ChEBI" id="CHEBI:29108"/>
    </ligand>
</feature>
<feature type="binding site" evidence="1">
    <location>
        <position position="142"/>
    </location>
    <ligand>
        <name>Ca(2+)</name>
        <dbReference type="ChEBI" id="CHEBI:29108"/>
    </ligand>
</feature>
<feature type="binding site" evidence="1">
    <location>
        <position position="143"/>
    </location>
    <ligand>
        <name>Ca(2+)</name>
        <dbReference type="ChEBI" id="CHEBI:29108"/>
    </ligand>
</feature>
<feature type="glycosylation site" description="N-linked (GlcNAc...) asparagine" evidence="2">
    <location>
        <position position="35"/>
    </location>
</feature>
<feature type="disulfide bond" evidence="3">
    <location>
        <begin position="27"/>
        <end position="38"/>
    </location>
</feature>
<feature type="disulfide bond" evidence="3">
    <location>
        <begin position="55"/>
        <end position="154"/>
    </location>
</feature>
<feature type="disulfide bond" evidence="3">
    <location>
        <begin position="129"/>
        <end position="146"/>
    </location>
</feature>
<protein>
    <recommendedName>
        <fullName>C-type lectin lectoxin-Lio3</fullName>
        <shortName>CTL</shortName>
    </recommendedName>
</protein>
<organism>
    <name type="scientific">Erythrolamprus poecilogyrus</name>
    <name type="common">Water snake</name>
    <name type="synonym">Liophis poecilogyrus</name>
    <dbReference type="NCBI Taxonomy" id="338838"/>
    <lineage>
        <taxon>Eukaryota</taxon>
        <taxon>Metazoa</taxon>
        <taxon>Chordata</taxon>
        <taxon>Craniata</taxon>
        <taxon>Vertebrata</taxon>
        <taxon>Euteleostomi</taxon>
        <taxon>Lepidosauria</taxon>
        <taxon>Squamata</taxon>
        <taxon>Bifurcata</taxon>
        <taxon>Unidentata</taxon>
        <taxon>Episquamata</taxon>
        <taxon>Toxicofera</taxon>
        <taxon>Serpentes</taxon>
        <taxon>Colubroidea</taxon>
        <taxon>Dipsadidae</taxon>
        <taxon>Erythrolamprus</taxon>
    </lineage>
</organism>
<keyword id="KW-0106">Calcium</keyword>
<keyword id="KW-1015">Disulfide bond</keyword>
<keyword id="KW-0325">Glycoprotein</keyword>
<keyword id="KW-0430">Lectin</keyword>
<keyword id="KW-0479">Metal-binding</keyword>
<keyword id="KW-0964">Secreted</keyword>
<keyword id="KW-0732">Signal</keyword>
<name>LECM3_ERYPO</name>